<evidence type="ECO:0000255" key="1">
    <source>
        <dbReference type="HAMAP-Rule" id="MF_00195"/>
    </source>
</evidence>
<dbReference type="EMBL" id="CP000946">
    <property type="protein sequence ID" value="ACA76833.1"/>
    <property type="molecule type" value="Genomic_DNA"/>
</dbReference>
<dbReference type="RefSeq" id="WP_000249410.1">
    <property type="nucleotide sequence ID" value="NZ_MTFT01000002.1"/>
</dbReference>
<dbReference type="SMR" id="B1IWF0"/>
<dbReference type="GeneID" id="75206204"/>
<dbReference type="KEGG" id="ecl:EcolC_1166"/>
<dbReference type="HOGENOM" id="CLU_016077_6_2_6"/>
<dbReference type="GO" id="GO:0005525">
    <property type="term" value="F:GTP binding"/>
    <property type="evidence" value="ECO:0007669"/>
    <property type="project" value="UniProtKB-UniRule"/>
</dbReference>
<dbReference type="GO" id="GO:0043022">
    <property type="term" value="F:ribosome binding"/>
    <property type="evidence" value="ECO:0007669"/>
    <property type="project" value="TreeGrafter"/>
</dbReference>
<dbReference type="GO" id="GO:0042254">
    <property type="term" value="P:ribosome biogenesis"/>
    <property type="evidence" value="ECO:0007669"/>
    <property type="project" value="UniProtKB-KW"/>
</dbReference>
<dbReference type="CDD" id="cd01894">
    <property type="entry name" value="EngA1"/>
    <property type="match status" value="1"/>
</dbReference>
<dbReference type="CDD" id="cd01895">
    <property type="entry name" value="EngA2"/>
    <property type="match status" value="1"/>
</dbReference>
<dbReference type="FunFam" id="3.30.300.20:FF:000004">
    <property type="entry name" value="GTPase Der"/>
    <property type="match status" value="1"/>
</dbReference>
<dbReference type="FunFam" id="3.40.50.300:FF:000040">
    <property type="entry name" value="GTPase Der"/>
    <property type="match status" value="1"/>
</dbReference>
<dbReference type="FunFam" id="3.40.50.300:FF:000057">
    <property type="entry name" value="GTPase Der"/>
    <property type="match status" value="1"/>
</dbReference>
<dbReference type="Gene3D" id="3.30.300.20">
    <property type="match status" value="1"/>
</dbReference>
<dbReference type="Gene3D" id="3.40.50.300">
    <property type="entry name" value="P-loop containing nucleotide triphosphate hydrolases"/>
    <property type="match status" value="2"/>
</dbReference>
<dbReference type="HAMAP" id="MF_00195">
    <property type="entry name" value="GTPase_Der"/>
    <property type="match status" value="1"/>
</dbReference>
<dbReference type="InterPro" id="IPR031166">
    <property type="entry name" value="G_ENGA"/>
</dbReference>
<dbReference type="InterPro" id="IPR006073">
    <property type="entry name" value="GTP-bd"/>
</dbReference>
<dbReference type="InterPro" id="IPR016484">
    <property type="entry name" value="GTPase_Der"/>
</dbReference>
<dbReference type="InterPro" id="IPR032859">
    <property type="entry name" value="KH_dom-like"/>
</dbReference>
<dbReference type="InterPro" id="IPR015946">
    <property type="entry name" value="KH_dom-like_a/b"/>
</dbReference>
<dbReference type="InterPro" id="IPR027417">
    <property type="entry name" value="P-loop_NTPase"/>
</dbReference>
<dbReference type="InterPro" id="IPR005225">
    <property type="entry name" value="Small_GTP-bd"/>
</dbReference>
<dbReference type="NCBIfam" id="TIGR03594">
    <property type="entry name" value="GTPase_EngA"/>
    <property type="match status" value="1"/>
</dbReference>
<dbReference type="NCBIfam" id="TIGR00231">
    <property type="entry name" value="small_GTP"/>
    <property type="match status" value="2"/>
</dbReference>
<dbReference type="PANTHER" id="PTHR43834">
    <property type="entry name" value="GTPASE DER"/>
    <property type="match status" value="1"/>
</dbReference>
<dbReference type="PANTHER" id="PTHR43834:SF6">
    <property type="entry name" value="GTPASE DER"/>
    <property type="match status" value="1"/>
</dbReference>
<dbReference type="Pfam" id="PF14714">
    <property type="entry name" value="KH_dom-like"/>
    <property type="match status" value="1"/>
</dbReference>
<dbReference type="Pfam" id="PF01926">
    <property type="entry name" value="MMR_HSR1"/>
    <property type="match status" value="2"/>
</dbReference>
<dbReference type="PIRSF" id="PIRSF006485">
    <property type="entry name" value="GTP-binding_EngA"/>
    <property type="match status" value="1"/>
</dbReference>
<dbReference type="PRINTS" id="PR00326">
    <property type="entry name" value="GTP1OBG"/>
</dbReference>
<dbReference type="SUPFAM" id="SSF52540">
    <property type="entry name" value="P-loop containing nucleoside triphosphate hydrolases"/>
    <property type="match status" value="2"/>
</dbReference>
<dbReference type="PROSITE" id="PS51712">
    <property type="entry name" value="G_ENGA"/>
    <property type="match status" value="2"/>
</dbReference>
<accession>B1IWF0</accession>
<keyword id="KW-0342">GTP-binding</keyword>
<keyword id="KW-0547">Nucleotide-binding</keyword>
<keyword id="KW-0677">Repeat</keyword>
<keyword id="KW-0690">Ribosome biogenesis</keyword>
<gene>
    <name evidence="1" type="primary">der</name>
    <name type="synonym">engA</name>
    <name type="ordered locus">EcolC_1166</name>
</gene>
<organism>
    <name type="scientific">Escherichia coli (strain ATCC 8739 / DSM 1576 / NBRC 3972 / NCIMB 8545 / WDCM 00012 / Crooks)</name>
    <dbReference type="NCBI Taxonomy" id="481805"/>
    <lineage>
        <taxon>Bacteria</taxon>
        <taxon>Pseudomonadati</taxon>
        <taxon>Pseudomonadota</taxon>
        <taxon>Gammaproteobacteria</taxon>
        <taxon>Enterobacterales</taxon>
        <taxon>Enterobacteriaceae</taxon>
        <taxon>Escherichia</taxon>
    </lineage>
</organism>
<sequence>MVPVVALVGRPNVGKSTLFNRLTRTRDALVADFPGLTRDRKYGRAEIEGREFICIDTGGIDGTEDGVETRMAEQSLLAIEEADVVLFMVDARAGLMPADEAIAKHLRSREKPTFLVANKTDGLDPDQAVVDFYSLGLGEIYPIAASHGRGVLSLLEHVLLPWMEDLAPQEEVDEDAEYWAQFEAEENGEEEEEDDFDPQSLPIKLAIVGRPNVGKSTLTNRILGEERVVVYDMPGTTRDSIYIPMERDGREYVLIDTAGVRKRGKITDAVEKFSVIKTLQAIEDANVVMLVIDAREGISDQDLSLLGFILNSGRSLVIVVNKWDGLSQEVKEQVKETLDFRLGFIDFARVHFISALHGSGVGNLFESVREAYDSSTRRVGTSMLTRIMTMAVEDHQPPLVRGRRVKLKYAHAGGYNPPIVVIHGNQVKDLPDSYKRYLMNYFRKSLDVMGSPIRIQFKEGENPYANKRNTLTPTQMRKRKRLMKHIKKNK</sequence>
<comment type="function">
    <text evidence="1">GTPase that plays an essential role in the late steps of ribosome biogenesis.</text>
</comment>
<comment type="subunit">
    <text evidence="1">Associates with the 50S ribosomal subunit.</text>
</comment>
<comment type="similarity">
    <text evidence="1">Belongs to the TRAFAC class TrmE-Era-EngA-EngB-Septin-like GTPase superfamily. EngA (Der) GTPase family.</text>
</comment>
<feature type="chain" id="PRO_1000077658" description="GTPase Der">
    <location>
        <begin position="1"/>
        <end position="490"/>
    </location>
</feature>
<feature type="domain" description="EngA-type G 1">
    <location>
        <begin position="3"/>
        <end position="166"/>
    </location>
</feature>
<feature type="domain" description="EngA-type G 2">
    <location>
        <begin position="203"/>
        <end position="376"/>
    </location>
</feature>
<feature type="domain" description="KH-like" evidence="1">
    <location>
        <begin position="377"/>
        <end position="461"/>
    </location>
</feature>
<feature type="binding site" evidence="1">
    <location>
        <begin position="9"/>
        <end position="16"/>
    </location>
    <ligand>
        <name>GTP</name>
        <dbReference type="ChEBI" id="CHEBI:37565"/>
        <label>1</label>
    </ligand>
</feature>
<feature type="binding site" evidence="1">
    <location>
        <begin position="56"/>
        <end position="60"/>
    </location>
    <ligand>
        <name>GTP</name>
        <dbReference type="ChEBI" id="CHEBI:37565"/>
        <label>1</label>
    </ligand>
</feature>
<feature type="binding site" evidence="1">
    <location>
        <begin position="118"/>
        <end position="121"/>
    </location>
    <ligand>
        <name>GTP</name>
        <dbReference type="ChEBI" id="CHEBI:37565"/>
        <label>1</label>
    </ligand>
</feature>
<feature type="binding site" evidence="1">
    <location>
        <begin position="209"/>
        <end position="216"/>
    </location>
    <ligand>
        <name>GTP</name>
        <dbReference type="ChEBI" id="CHEBI:37565"/>
        <label>2</label>
    </ligand>
</feature>
<feature type="binding site" evidence="1">
    <location>
        <begin position="256"/>
        <end position="260"/>
    </location>
    <ligand>
        <name>GTP</name>
        <dbReference type="ChEBI" id="CHEBI:37565"/>
        <label>2</label>
    </ligand>
</feature>
<feature type="binding site" evidence="1">
    <location>
        <begin position="321"/>
        <end position="324"/>
    </location>
    <ligand>
        <name>GTP</name>
        <dbReference type="ChEBI" id="CHEBI:37565"/>
        <label>2</label>
    </ligand>
</feature>
<reference key="1">
    <citation type="submission" date="2008-02" db="EMBL/GenBank/DDBJ databases">
        <title>Complete sequence of Escherichia coli C str. ATCC 8739.</title>
        <authorList>
            <person name="Copeland A."/>
            <person name="Lucas S."/>
            <person name="Lapidus A."/>
            <person name="Glavina del Rio T."/>
            <person name="Dalin E."/>
            <person name="Tice H."/>
            <person name="Bruce D."/>
            <person name="Goodwin L."/>
            <person name="Pitluck S."/>
            <person name="Kiss H."/>
            <person name="Brettin T."/>
            <person name="Detter J.C."/>
            <person name="Han C."/>
            <person name="Kuske C.R."/>
            <person name="Schmutz J."/>
            <person name="Larimer F."/>
            <person name="Land M."/>
            <person name="Hauser L."/>
            <person name="Kyrpides N."/>
            <person name="Mikhailova N."/>
            <person name="Ingram L."/>
            <person name="Richardson P."/>
        </authorList>
    </citation>
    <scope>NUCLEOTIDE SEQUENCE [LARGE SCALE GENOMIC DNA]</scope>
    <source>
        <strain>ATCC 8739 / DSM 1576 / NBRC 3972 / NCIMB 8545 / WDCM 00012 / Crooks</strain>
    </source>
</reference>
<protein>
    <recommendedName>
        <fullName evidence="1">GTPase Der</fullName>
    </recommendedName>
    <alternativeName>
        <fullName evidence="1">GTP-binding protein EngA</fullName>
    </alternativeName>
</protein>
<name>DER_ECOLC</name>
<proteinExistence type="inferred from homology"/>